<organism>
    <name type="scientific">Klebsiella pneumoniae (strain 342)</name>
    <dbReference type="NCBI Taxonomy" id="507522"/>
    <lineage>
        <taxon>Bacteria</taxon>
        <taxon>Pseudomonadati</taxon>
        <taxon>Pseudomonadota</taxon>
        <taxon>Gammaproteobacteria</taxon>
        <taxon>Enterobacterales</taxon>
        <taxon>Enterobacteriaceae</taxon>
        <taxon>Klebsiella/Raoultella group</taxon>
        <taxon>Klebsiella</taxon>
        <taxon>Klebsiella pneumoniae complex</taxon>
    </lineage>
</organism>
<gene>
    <name evidence="1" type="primary">psiE</name>
    <name type="ordered locus">KPK_5256</name>
</gene>
<sequence length="136" mass="15576">MSSVYRPLVNFIATAMQTVLNLGLLCLGIILIVFLGKETLHLADVLFTPEPTSKYRLVEGLVVYFLYFEFIALIVKYFQSGFHFPLRYFVYIGITAIVRLIIIDHESPMAVLIYSAAILILVITLWLCNSNRLKRE</sequence>
<feature type="chain" id="PRO_1000136216" description="Protein PsiE homolog">
    <location>
        <begin position="1"/>
        <end position="136"/>
    </location>
</feature>
<feature type="transmembrane region" description="Helical" evidence="1">
    <location>
        <begin position="15"/>
        <end position="35"/>
    </location>
</feature>
<feature type="transmembrane region" description="Helical" evidence="1">
    <location>
        <begin position="58"/>
        <end position="78"/>
    </location>
</feature>
<feature type="transmembrane region" description="Helical" evidence="1">
    <location>
        <begin position="83"/>
        <end position="103"/>
    </location>
</feature>
<feature type="transmembrane region" description="Helical" evidence="1">
    <location>
        <begin position="108"/>
        <end position="128"/>
    </location>
</feature>
<comment type="subcellular location">
    <subcellularLocation>
        <location evidence="1">Cell inner membrane</location>
        <topology evidence="1">Multi-pass membrane protein</topology>
    </subcellularLocation>
</comment>
<comment type="similarity">
    <text evidence="1">Belongs to the PsiE family.</text>
</comment>
<accession>B5XY00</accession>
<evidence type="ECO:0000255" key="1">
    <source>
        <dbReference type="HAMAP-Rule" id="MF_01048"/>
    </source>
</evidence>
<keyword id="KW-0997">Cell inner membrane</keyword>
<keyword id="KW-1003">Cell membrane</keyword>
<keyword id="KW-0472">Membrane</keyword>
<keyword id="KW-0812">Transmembrane</keyword>
<keyword id="KW-1133">Transmembrane helix</keyword>
<protein>
    <recommendedName>
        <fullName evidence="1">Protein PsiE homolog</fullName>
    </recommendedName>
</protein>
<proteinExistence type="inferred from homology"/>
<name>PSIE_KLEP3</name>
<dbReference type="EMBL" id="CP000964">
    <property type="protein sequence ID" value="ACI09601.1"/>
    <property type="molecule type" value="Genomic_DNA"/>
</dbReference>
<dbReference type="SMR" id="B5XY00"/>
<dbReference type="KEGG" id="kpe:KPK_5256"/>
<dbReference type="HOGENOM" id="CLU_127561_0_1_6"/>
<dbReference type="Proteomes" id="UP000001734">
    <property type="component" value="Chromosome"/>
</dbReference>
<dbReference type="GO" id="GO:0005886">
    <property type="term" value="C:plasma membrane"/>
    <property type="evidence" value="ECO:0007669"/>
    <property type="project" value="UniProtKB-SubCell"/>
</dbReference>
<dbReference type="GO" id="GO:0016036">
    <property type="term" value="P:cellular response to phosphate starvation"/>
    <property type="evidence" value="ECO:0007669"/>
    <property type="project" value="InterPro"/>
</dbReference>
<dbReference type="HAMAP" id="MF_01048">
    <property type="entry name" value="PsiE"/>
    <property type="match status" value="1"/>
</dbReference>
<dbReference type="InterPro" id="IPR009315">
    <property type="entry name" value="P_starv_induced_PsiE"/>
</dbReference>
<dbReference type="InterPro" id="IPR020948">
    <property type="entry name" value="P_starv_induced_PsiE-like"/>
</dbReference>
<dbReference type="NCBIfam" id="NF002764">
    <property type="entry name" value="PRK02833.1-2"/>
    <property type="match status" value="1"/>
</dbReference>
<dbReference type="NCBIfam" id="NF002765">
    <property type="entry name" value="PRK02833.1-3"/>
    <property type="match status" value="1"/>
</dbReference>
<dbReference type="NCBIfam" id="NF002767">
    <property type="entry name" value="PRK02833.1-5"/>
    <property type="match status" value="1"/>
</dbReference>
<dbReference type="PANTHER" id="PTHR37819">
    <property type="entry name" value="PROTEIN PSIE"/>
    <property type="match status" value="1"/>
</dbReference>
<dbReference type="PANTHER" id="PTHR37819:SF1">
    <property type="entry name" value="PROTEIN PSIE"/>
    <property type="match status" value="1"/>
</dbReference>
<dbReference type="Pfam" id="PF06146">
    <property type="entry name" value="PsiE"/>
    <property type="match status" value="1"/>
</dbReference>
<dbReference type="PIRSF" id="PIRSF029598">
    <property type="entry name" value="PsiE"/>
    <property type="match status" value="1"/>
</dbReference>
<reference key="1">
    <citation type="journal article" date="2008" name="PLoS Genet.">
        <title>Complete genome sequence of the N2-fixing broad host range endophyte Klebsiella pneumoniae 342 and virulence predictions verified in mice.</title>
        <authorList>
            <person name="Fouts D.E."/>
            <person name="Tyler H.L."/>
            <person name="DeBoy R.T."/>
            <person name="Daugherty S."/>
            <person name="Ren Q."/>
            <person name="Badger J.H."/>
            <person name="Durkin A.S."/>
            <person name="Huot H."/>
            <person name="Shrivastava S."/>
            <person name="Kothari S."/>
            <person name="Dodson R.J."/>
            <person name="Mohamoud Y."/>
            <person name="Khouri H."/>
            <person name="Roesch L.F.W."/>
            <person name="Krogfelt K.A."/>
            <person name="Struve C."/>
            <person name="Triplett E.W."/>
            <person name="Methe B.A."/>
        </authorList>
    </citation>
    <scope>NUCLEOTIDE SEQUENCE [LARGE SCALE GENOMIC DNA]</scope>
    <source>
        <strain>342</strain>
    </source>
</reference>